<accession>Q8PXI0</accession>
<evidence type="ECO:0000255" key="1">
    <source>
        <dbReference type="HAMAP-Rule" id="MF_00210"/>
    </source>
</evidence>
<name>AROA_METMA</name>
<sequence length="430" mass="45798">MRASISKSSIKGEVFAPPSKSYTHRAITLAALSKESIIHRPLLSADTLATIRASEMFGAAVRREKENLIIQGSNGKPGIPDDVIDAANSGTTLRFMTAIAGLTDGITVLTGDSSLRTRPNGPLLEVLNRLGAKACSTRGNERAPIVVKGGIKGSEVEISGSISSQFISALLIACPLAENSTTLSIIGKLKSRPYVDVTIEMLGLAGVKIHTDDNNGTKFIIPGKQKYDLKQYTVPGDFSSASYLLAAAAMLEGSEITVKNLFPSKQGDKVIIDTLKQMGADITWDMEAGIVTVRGGRKLKAITFDAGSTPDLVPTVAVLASVAEGTSRIENAEHVRYKETDRLHALATELPKMGVSLKEEMDSLTITGGTLEGAEVHGWDDHRIVMSLAIAGMVAGNTIVDTTESVSISYPDFFKDMRNLGAKVKEIPEE</sequence>
<feature type="chain" id="PRO_0000088331" description="3-phosphoshikimate 1-carboxyvinyltransferase">
    <location>
        <begin position="1"/>
        <end position="430"/>
    </location>
</feature>
<feature type="active site" description="Proton acceptor" evidence="1">
    <location>
        <position position="311"/>
    </location>
</feature>
<feature type="binding site" evidence="1">
    <location>
        <position position="20"/>
    </location>
    <ligand>
        <name>3-phosphoshikimate</name>
        <dbReference type="ChEBI" id="CHEBI:145989"/>
    </ligand>
</feature>
<feature type="binding site" evidence="1">
    <location>
        <position position="20"/>
    </location>
    <ligand>
        <name>phosphoenolpyruvate</name>
        <dbReference type="ChEBI" id="CHEBI:58702"/>
    </ligand>
</feature>
<feature type="binding site" evidence="1">
    <location>
        <position position="21"/>
    </location>
    <ligand>
        <name>3-phosphoshikimate</name>
        <dbReference type="ChEBI" id="CHEBI:145989"/>
    </ligand>
</feature>
<feature type="binding site" evidence="1">
    <location>
        <position position="25"/>
    </location>
    <ligand>
        <name>3-phosphoshikimate</name>
        <dbReference type="ChEBI" id="CHEBI:145989"/>
    </ligand>
</feature>
<feature type="binding site" evidence="1">
    <location>
        <position position="90"/>
    </location>
    <ligand>
        <name>phosphoenolpyruvate</name>
        <dbReference type="ChEBI" id="CHEBI:58702"/>
    </ligand>
</feature>
<feature type="binding site" evidence="1">
    <location>
        <position position="118"/>
    </location>
    <ligand>
        <name>phosphoenolpyruvate</name>
        <dbReference type="ChEBI" id="CHEBI:58702"/>
    </ligand>
</feature>
<feature type="binding site" evidence="1">
    <location>
        <position position="163"/>
    </location>
    <ligand>
        <name>3-phosphoshikimate</name>
        <dbReference type="ChEBI" id="CHEBI:145989"/>
    </ligand>
</feature>
<feature type="binding site" evidence="1">
    <location>
        <position position="164"/>
    </location>
    <ligand>
        <name>3-phosphoshikimate</name>
        <dbReference type="ChEBI" id="CHEBI:145989"/>
    </ligand>
</feature>
<feature type="binding site" evidence="1">
    <location>
        <position position="165"/>
    </location>
    <ligand>
        <name>3-phosphoshikimate</name>
        <dbReference type="ChEBI" id="CHEBI:145989"/>
    </ligand>
</feature>
<feature type="binding site" evidence="1">
    <location>
        <position position="165"/>
    </location>
    <ligand>
        <name>phosphoenolpyruvate</name>
        <dbReference type="ChEBI" id="CHEBI:58702"/>
    </ligand>
</feature>
<feature type="binding site" evidence="1">
    <location>
        <position position="191"/>
    </location>
    <ligand>
        <name>3-phosphoshikimate</name>
        <dbReference type="ChEBI" id="CHEBI:145989"/>
    </ligand>
</feature>
<feature type="binding site" evidence="1">
    <location>
        <position position="311"/>
    </location>
    <ligand>
        <name>3-phosphoshikimate</name>
        <dbReference type="ChEBI" id="CHEBI:145989"/>
    </ligand>
</feature>
<feature type="binding site" evidence="1">
    <location>
        <position position="338"/>
    </location>
    <ligand>
        <name>3-phosphoshikimate</name>
        <dbReference type="ChEBI" id="CHEBI:145989"/>
    </ligand>
</feature>
<feature type="binding site" evidence="1">
    <location>
        <position position="342"/>
    </location>
    <ligand>
        <name>phosphoenolpyruvate</name>
        <dbReference type="ChEBI" id="CHEBI:58702"/>
    </ligand>
</feature>
<feature type="binding site" evidence="1">
    <location>
        <position position="383"/>
    </location>
    <ligand>
        <name>phosphoenolpyruvate</name>
        <dbReference type="ChEBI" id="CHEBI:58702"/>
    </ligand>
</feature>
<gene>
    <name evidence="1" type="primary">aroA</name>
    <name type="ordered locus">MM_1238</name>
</gene>
<comment type="function">
    <text evidence="1">Catalyzes the transfer of the enolpyruvyl moiety of phosphoenolpyruvate (PEP) to the 5-hydroxyl of shikimate-3-phosphate (S3P) to produce enolpyruvyl shikimate-3-phosphate and inorganic phosphate.</text>
</comment>
<comment type="catalytic activity">
    <reaction evidence="1">
        <text>3-phosphoshikimate + phosphoenolpyruvate = 5-O-(1-carboxyvinyl)-3-phosphoshikimate + phosphate</text>
        <dbReference type="Rhea" id="RHEA:21256"/>
        <dbReference type="ChEBI" id="CHEBI:43474"/>
        <dbReference type="ChEBI" id="CHEBI:57701"/>
        <dbReference type="ChEBI" id="CHEBI:58702"/>
        <dbReference type="ChEBI" id="CHEBI:145989"/>
        <dbReference type="EC" id="2.5.1.19"/>
    </reaction>
    <physiologicalReaction direction="left-to-right" evidence="1">
        <dbReference type="Rhea" id="RHEA:21257"/>
    </physiologicalReaction>
</comment>
<comment type="pathway">
    <text evidence="1">Metabolic intermediate biosynthesis; chorismate biosynthesis.</text>
</comment>
<comment type="subunit">
    <text evidence="1">Monomer.</text>
</comment>
<comment type="subcellular location">
    <subcellularLocation>
        <location evidence="1">Cytoplasm</location>
    </subcellularLocation>
</comment>
<comment type="similarity">
    <text evidence="1">Belongs to the EPSP synthase family.</text>
</comment>
<reference key="1">
    <citation type="journal article" date="2002" name="J. Mol. Microbiol. Biotechnol.">
        <title>The genome of Methanosarcina mazei: evidence for lateral gene transfer between Bacteria and Archaea.</title>
        <authorList>
            <person name="Deppenmeier U."/>
            <person name="Johann A."/>
            <person name="Hartsch T."/>
            <person name="Merkl R."/>
            <person name="Schmitz R.A."/>
            <person name="Martinez-Arias R."/>
            <person name="Henne A."/>
            <person name="Wiezer A."/>
            <person name="Baeumer S."/>
            <person name="Jacobi C."/>
            <person name="Brueggemann H."/>
            <person name="Lienard T."/>
            <person name="Christmann A."/>
            <person name="Boemecke M."/>
            <person name="Steckel S."/>
            <person name="Bhattacharyya A."/>
            <person name="Lykidis A."/>
            <person name="Overbeek R."/>
            <person name="Klenk H.-P."/>
            <person name="Gunsalus R.P."/>
            <person name="Fritz H.-J."/>
            <person name="Gottschalk G."/>
        </authorList>
    </citation>
    <scope>NUCLEOTIDE SEQUENCE [LARGE SCALE GENOMIC DNA]</scope>
    <source>
        <strain>ATCC BAA-159 / DSM 3647 / Goe1 / Go1 / JCM 11833 / OCM 88</strain>
    </source>
</reference>
<proteinExistence type="inferred from homology"/>
<dbReference type="EC" id="2.5.1.19" evidence="1"/>
<dbReference type="EMBL" id="AE008384">
    <property type="protein sequence ID" value="AAM30934.1"/>
    <property type="molecule type" value="Genomic_DNA"/>
</dbReference>
<dbReference type="RefSeq" id="WP_011033187.1">
    <property type="nucleotide sequence ID" value="NC_003901.1"/>
</dbReference>
<dbReference type="SMR" id="Q8PXI0"/>
<dbReference type="GeneID" id="82160272"/>
<dbReference type="KEGG" id="mma:MM_1238"/>
<dbReference type="PATRIC" id="fig|192952.21.peg.1443"/>
<dbReference type="eggNOG" id="arCOG04134">
    <property type="taxonomic scope" value="Archaea"/>
</dbReference>
<dbReference type="HOGENOM" id="CLU_024321_0_0_2"/>
<dbReference type="UniPathway" id="UPA00053"/>
<dbReference type="Proteomes" id="UP000000595">
    <property type="component" value="Chromosome"/>
</dbReference>
<dbReference type="GO" id="GO:0005737">
    <property type="term" value="C:cytoplasm"/>
    <property type="evidence" value="ECO:0007669"/>
    <property type="project" value="UniProtKB-SubCell"/>
</dbReference>
<dbReference type="GO" id="GO:0003866">
    <property type="term" value="F:3-phosphoshikimate 1-carboxyvinyltransferase activity"/>
    <property type="evidence" value="ECO:0007669"/>
    <property type="project" value="UniProtKB-UniRule"/>
</dbReference>
<dbReference type="GO" id="GO:0008652">
    <property type="term" value="P:amino acid biosynthetic process"/>
    <property type="evidence" value="ECO:0007669"/>
    <property type="project" value="UniProtKB-KW"/>
</dbReference>
<dbReference type="GO" id="GO:0009073">
    <property type="term" value="P:aromatic amino acid family biosynthetic process"/>
    <property type="evidence" value="ECO:0007669"/>
    <property type="project" value="UniProtKB-KW"/>
</dbReference>
<dbReference type="GO" id="GO:0009423">
    <property type="term" value="P:chorismate biosynthetic process"/>
    <property type="evidence" value="ECO:0007669"/>
    <property type="project" value="UniProtKB-UniRule"/>
</dbReference>
<dbReference type="CDD" id="cd01556">
    <property type="entry name" value="EPSP_synthase"/>
    <property type="match status" value="1"/>
</dbReference>
<dbReference type="FunFam" id="3.65.10.10:FF:000012">
    <property type="entry name" value="Pentafunctional AROM polypeptide"/>
    <property type="match status" value="1"/>
</dbReference>
<dbReference type="Gene3D" id="3.65.10.10">
    <property type="entry name" value="Enolpyruvate transferase domain"/>
    <property type="match status" value="2"/>
</dbReference>
<dbReference type="HAMAP" id="MF_00210">
    <property type="entry name" value="EPSP_synth"/>
    <property type="match status" value="1"/>
</dbReference>
<dbReference type="InterPro" id="IPR001986">
    <property type="entry name" value="Enolpyruvate_Tfrase_dom"/>
</dbReference>
<dbReference type="InterPro" id="IPR036968">
    <property type="entry name" value="Enolpyruvate_Tfrase_sf"/>
</dbReference>
<dbReference type="InterPro" id="IPR006264">
    <property type="entry name" value="EPSP_synthase"/>
</dbReference>
<dbReference type="InterPro" id="IPR023193">
    <property type="entry name" value="EPSP_synthase_CS"/>
</dbReference>
<dbReference type="InterPro" id="IPR013792">
    <property type="entry name" value="RNA3'P_cycl/enolpyr_Trfase_a/b"/>
</dbReference>
<dbReference type="NCBIfam" id="TIGR01356">
    <property type="entry name" value="aroA"/>
    <property type="match status" value="1"/>
</dbReference>
<dbReference type="PANTHER" id="PTHR21090">
    <property type="entry name" value="AROM/DEHYDROQUINATE SYNTHASE"/>
    <property type="match status" value="1"/>
</dbReference>
<dbReference type="PANTHER" id="PTHR21090:SF5">
    <property type="entry name" value="PENTAFUNCTIONAL AROM POLYPEPTIDE"/>
    <property type="match status" value="1"/>
</dbReference>
<dbReference type="Pfam" id="PF00275">
    <property type="entry name" value="EPSP_synthase"/>
    <property type="match status" value="1"/>
</dbReference>
<dbReference type="PIRSF" id="PIRSF000505">
    <property type="entry name" value="EPSPS"/>
    <property type="match status" value="1"/>
</dbReference>
<dbReference type="SUPFAM" id="SSF55205">
    <property type="entry name" value="EPT/RTPC-like"/>
    <property type="match status" value="1"/>
</dbReference>
<dbReference type="PROSITE" id="PS00104">
    <property type="entry name" value="EPSP_SYNTHASE_1"/>
    <property type="match status" value="1"/>
</dbReference>
<dbReference type="PROSITE" id="PS00885">
    <property type="entry name" value="EPSP_SYNTHASE_2"/>
    <property type="match status" value="1"/>
</dbReference>
<protein>
    <recommendedName>
        <fullName evidence="1">3-phosphoshikimate 1-carboxyvinyltransferase</fullName>
        <ecNumber evidence="1">2.5.1.19</ecNumber>
    </recommendedName>
    <alternativeName>
        <fullName evidence="1">5-enolpyruvylshikimate-3-phosphate synthase</fullName>
        <shortName evidence="1">EPSP synthase</shortName>
        <shortName evidence="1">EPSPS</shortName>
    </alternativeName>
</protein>
<keyword id="KW-0028">Amino-acid biosynthesis</keyword>
<keyword id="KW-0057">Aromatic amino acid biosynthesis</keyword>
<keyword id="KW-0963">Cytoplasm</keyword>
<keyword id="KW-0808">Transferase</keyword>
<organism>
    <name type="scientific">Methanosarcina mazei (strain ATCC BAA-159 / DSM 3647 / Goe1 / Go1 / JCM 11833 / OCM 88)</name>
    <name type="common">Methanosarcina frisia</name>
    <dbReference type="NCBI Taxonomy" id="192952"/>
    <lineage>
        <taxon>Archaea</taxon>
        <taxon>Methanobacteriati</taxon>
        <taxon>Methanobacteriota</taxon>
        <taxon>Stenosarchaea group</taxon>
        <taxon>Methanomicrobia</taxon>
        <taxon>Methanosarcinales</taxon>
        <taxon>Methanosarcinaceae</taxon>
        <taxon>Methanosarcina</taxon>
    </lineage>
</organism>